<sequence>MGKYNLVLSEYLSFVYNSQSAVQIPIYYSSNSELEKRCIEFHAKCVDSSKKGLSLKPLFEEYKDVIDNATLLSILSYSYDKYNAVERKLVNYAKGKPLEADLTANELDYENNKITSELFQSAEEYTDSLMDPAILTSLSSNLNAVMFWLERHSNDVADANKIYKRRLDLFTIVASTVNKYGVPRHNEKYRYEYEVMKDKPYYLVTWANSSIEMLMSVFSHEDYLIAKELIILSYSNRSTLAKLVSSPMSILVALIDINGTFITNEELELEFSDKYVKAIVPDQIFDELQEMIDNMRKVGLVDIPKMIQEWLVDCSLEKFTLMSKIYSWSFHVGFRKQKMIDAALDQLKTEYTEDVDGEMYNEYTMLIRDEIVKMLEVPVKHDDHLLRDSELAGLLSMSSASNGESRQLKFGRKTIFSTKKNMHVMDDIAHGRYTPGVIPPVNVDRPIPLGRRDVPGRRTRIIFILPYEYFIAQHAVVEKMLLYAKHTREYAEFYSQSNQLLSYGDVTRFLSSNSMVLYTDVSQWDSSQHNTQPFRKGIIMGLDMLSNMTNDPKVAQTLNLYKQTQINLMDSYVQIPDGNVIKKIQYGAVASGEKQTKAANSIANLALIKMVLSRIANKYSFITKIIRVDGDDNYAVLQFNTDVTKQMVQDVSNDVRYIYSRMNAKVKALVSTVGIEIAKRYIAGGKIFFRAGINLLNNEKRGQSTQWDQAAILYSNYIVNKLRGFETDREFILTKIIQMTSVAITGSLRLFPSERVLTTNSTFKVFDSEDFIIEYGTTDDEVYIQRAFMSLSSQKSGIADEIASSQTFKNYVNKLSDQLLVSKNVIVSKGIAVTEKAKLNSYAPVYLEKRRAQISALLTMLQKPVSFKSNKITINDILRDIKPFFVTSEANLSIQYRKFMPTLPDNVQYVIQCIGSRTYQIEDSGSKSSISKLISKYSVYKPSIEELYKVISLREQEIQLYLVSLGVPPVDAGTYVGSRIYSQDKYKILESYVYNLLSINYGCYQLFDFNSPDLEKLIRIPFKGKIPAVTFILHLYAKLEIINYAIKNGAWISLFCNYPKSEMIKLWKKMWNITALRSPYTSANFFQD</sequence>
<proteinExistence type="inferred from homology"/>
<keyword id="KW-0460">Magnesium</keyword>
<keyword id="KW-0547">Nucleotide-binding</keyword>
<keyword id="KW-0548">Nucleotidyltransferase</keyword>
<keyword id="KW-0694">RNA-binding</keyword>
<keyword id="KW-0696">RNA-directed RNA polymerase</keyword>
<keyword id="KW-0808">Transferase</keyword>
<keyword id="KW-0693">Viral RNA replication</keyword>
<keyword id="KW-0946">Virion</keyword>
<evidence type="ECO:0000250" key="1"/>
<evidence type="ECO:0000255" key="2">
    <source>
        <dbReference type="PROSITE-ProRule" id="PRU00539"/>
    </source>
</evidence>
<evidence type="ECO:0000305" key="3"/>
<comment type="function">
    <text evidence="2">RNA-directed RNA polymerase that is involved in both transcription and genome replication. Together with VP3 capping enzyme, forms an enzyme complex positioned near the channels situated at each of the five-fold vertices of the core. Following infection, the outermost layer of the virus is lost, leaving a double-layered particle (DLP) made up of the core and VP6 shell. VP1 then catalyzes the transcription of fully conservative plus-strand genomic RNAs that are extruded through the DLP's channels into the cytoplasm where they function as mRNAs for translation of viral proteins. One copy of each of the viral (+)RNAs is also recruited during core assembly, together with newly synthesized polymerase complexes and VP2. The polymerase of these novo-formed particles catalyzes the synthesis of complementary minus-strands leading to dsRNA formation. To do so, the polymerase specifically recognizes and binds 4 bases 5'-UGUG-3' in the conserved 3'-sequence of plus-strand RNA templates. VP2 presumably activates the autoinhibited VP1-RNA complex to coordinate packaging and genome replication. Once dsRNA synthesis is complete, the polymerase switches to the transcriptional mode, thus providing secondary transcription (By similarity).</text>
</comment>
<comment type="catalytic activity">
    <reaction evidence="2">
        <text>RNA(n) + a ribonucleoside 5'-triphosphate = RNA(n+1) + diphosphate</text>
        <dbReference type="Rhea" id="RHEA:21248"/>
        <dbReference type="Rhea" id="RHEA-COMP:14527"/>
        <dbReference type="Rhea" id="RHEA-COMP:17342"/>
        <dbReference type="ChEBI" id="CHEBI:33019"/>
        <dbReference type="ChEBI" id="CHEBI:61557"/>
        <dbReference type="ChEBI" id="CHEBI:140395"/>
        <dbReference type="EC" id="2.7.7.48"/>
    </reaction>
</comment>
<comment type="cofactor">
    <cofactor evidence="3">
        <name>Mg(2+)</name>
        <dbReference type="ChEBI" id="CHEBI:18420"/>
    </cofactor>
</comment>
<comment type="subunit">
    <text evidence="1 3">Interacts with VP3 (Potential). Interacts with VP2; this interaction activates VP1. Interacts with NSP5; this interaction is probably necessary for the formation of functional virus factories. Interacts with NSP2; this interaction is weak (By similarity).</text>
</comment>
<comment type="subcellular location">
    <subcellularLocation>
        <location evidence="3">Virion</location>
    </subcellularLocation>
    <text evidence="1">Attached inside the inner capsid as a minor component. Also found in spherical cytoplasmic structures, called virus factories, that appear early after infection and are the site of viral replication and packaging (By similarity).</text>
</comment>
<comment type="similarity">
    <text evidence="3">Belongs to the reoviridae RNA-directed RNA polymerase family.</text>
</comment>
<dbReference type="EC" id="2.7.7.48"/>
<dbReference type="EMBL" id="EF583037">
    <property type="protein sequence ID" value="ABU87846.1"/>
    <property type="molecule type" value="Genomic_RNA"/>
</dbReference>
<dbReference type="EMBL" id="AF044368">
    <property type="protein sequence ID" value="AAF19595.1"/>
    <property type="molecule type" value="Genomic_RNA"/>
</dbReference>
<dbReference type="EMBL" id="AF106319">
    <property type="protein sequence ID" value="AAD47333.1"/>
    <property type="molecule type" value="Genomic_RNA"/>
</dbReference>
<dbReference type="SMR" id="B1NKS9"/>
<dbReference type="Proteomes" id="UP000007047">
    <property type="component" value="Genome"/>
</dbReference>
<dbReference type="GO" id="GO:0044423">
    <property type="term" value="C:virion component"/>
    <property type="evidence" value="ECO:0007669"/>
    <property type="project" value="UniProtKB-KW"/>
</dbReference>
<dbReference type="GO" id="GO:0000166">
    <property type="term" value="F:nucleotide binding"/>
    <property type="evidence" value="ECO:0007669"/>
    <property type="project" value="UniProtKB-KW"/>
</dbReference>
<dbReference type="GO" id="GO:0003723">
    <property type="term" value="F:RNA binding"/>
    <property type="evidence" value="ECO:0007669"/>
    <property type="project" value="UniProtKB-KW"/>
</dbReference>
<dbReference type="GO" id="GO:0003968">
    <property type="term" value="F:RNA-directed RNA polymerase activity"/>
    <property type="evidence" value="ECO:0007669"/>
    <property type="project" value="UniProtKB-KW"/>
</dbReference>
<dbReference type="GO" id="GO:0006351">
    <property type="term" value="P:DNA-templated transcription"/>
    <property type="evidence" value="ECO:0007669"/>
    <property type="project" value="InterPro"/>
</dbReference>
<dbReference type="GO" id="GO:0019079">
    <property type="term" value="P:viral genome replication"/>
    <property type="evidence" value="ECO:0007669"/>
    <property type="project" value="InterPro"/>
</dbReference>
<dbReference type="Gene3D" id="1.10.357.80">
    <property type="match status" value="2"/>
</dbReference>
<dbReference type="Gene3D" id="1.20.120.1390">
    <property type="match status" value="1"/>
</dbReference>
<dbReference type="Gene3D" id="3.30.230.140">
    <property type="match status" value="2"/>
</dbReference>
<dbReference type="Gene3D" id="3.30.70.2480">
    <property type="match status" value="1"/>
</dbReference>
<dbReference type="Gene3D" id="1.10.10.1990">
    <property type="entry name" value="Viral RNA-directed RNA polymerase, 4-helical domain"/>
    <property type="match status" value="1"/>
</dbReference>
<dbReference type="InterPro" id="IPR043502">
    <property type="entry name" value="DNA/RNA_pol_sf"/>
</dbReference>
<dbReference type="InterPro" id="IPR042032">
    <property type="entry name" value="RNA-dir_pol_4-hel_dom"/>
</dbReference>
<dbReference type="InterPro" id="IPR001795">
    <property type="entry name" value="RNA-dir_pol_luteovirus"/>
</dbReference>
<dbReference type="InterPro" id="IPR007097">
    <property type="entry name" value="RNA-dir_pol_reovirus"/>
</dbReference>
<dbReference type="InterPro" id="IPR022071">
    <property type="entry name" value="Rotavirus_VP1_C"/>
</dbReference>
<dbReference type="Pfam" id="PF02123">
    <property type="entry name" value="RdRP_4"/>
    <property type="match status" value="1"/>
</dbReference>
<dbReference type="Pfam" id="PF12289">
    <property type="entry name" value="Rotavirus_VP1"/>
    <property type="match status" value="1"/>
</dbReference>
<dbReference type="SUPFAM" id="SSF56672">
    <property type="entry name" value="DNA/RNA polymerases"/>
    <property type="match status" value="1"/>
</dbReference>
<dbReference type="PROSITE" id="PS50523">
    <property type="entry name" value="RDRP_DSRNA_REO"/>
    <property type="match status" value="1"/>
</dbReference>
<organismHost>
    <name type="scientific">Homo sapiens</name>
    <name type="common">Human</name>
    <dbReference type="NCBI Taxonomy" id="9606"/>
</organismHost>
<organism>
    <name type="scientific">Rotavirus A (strain RVA/Human/United States/P/1974/G3P1A[8])</name>
    <name type="common">RV-A</name>
    <dbReference type="NCBI Taxonomy" id="10957"/>
    <lineage>
        <taxon>Viruses</taxon>
        <taxon>Riboviria</taxon>
        <taxon>Orthornavirae</taxon>
        <taxon>Duplornaviricota</taxon>
        <taxon>Resentoviricetes</taxon>
        <taxon>Reovirales</taxon>
        <taxon>Sedoreoviridae</taxon>
        <taxon>Rotavirus</taxon>
        <taxon>Rotavirus A</taxon>
    </lineage>
</organism>
<accession>B1NKS9</accession>
<accession>Q9QAT9</accession>
<accession>Q9QRY2</accession>
<name>RDRP_ROTHP</name>
<feature type="chain" id="PRO_0000368046" description="RNA-directed RNA polymerase">
    <location>
        <begin position="1"/>
        <end position="1088"/>
    </location>
</feature>
<feature type="domain" description="RdRp catalytic" evidence="2">
    <location>
        <begin position="501"/>
        <end position="687"/>
    </location>
</feature>
<feature type="sequence conflict" description="In Ref. 2; AAF19595 and 3; AAD47333." evidence="3" ref="2 3">
    <original>R</original>
    <variation>G</variation>
    <location>
        <position position="37"/>
    </location>
</feature>
<reference key="1">
    <citation type="journal article" date="2008" name="J. Virol.">
        <title>Full genome-based classification of rotaviruses reveals a common origin between human Wa-Like and porcine rotavirus strains and human DS-1-like and bovine rotavirus strains.</title>
        <authorList>
            <person name="Matthijnssens J."/>
            <person name="Ciarlet M."/>
            <person name="Heiman E.M."/>
            <person name="Arijs I."/>
            <person name="Delbeke T."/>
            <person name="McDonald S.M."/>
            <person name="Palombo E.A."/>
            <person name="Iturriza-Gomara M."/>
            <person name="Maes P."/>
            <person name="Patton J.T."/>
            <person name="Rahman M."/>
            <person name="Van Ranst M."/>
        </authorList>
    </citation>
    <scope>NUCLEOTIDE SEQUENCE [GENOMIC RNA]</scope>
</reference>
<reference key="2">
    <citation type="submission" date="1998-01" db="EMBL/GenBank/DDBJ databases">
        <authorList>
            <person name="Lee C.N."/>
            <person name="Zao C.L."/>
        </authorList>
    </citation>
    <scope>NUCLEOTIDE SEQUENCE [GENOMIC RNA] OF 8-178</scope>
</reference>
<reference key="3">
    <citation type="journal article" date="1999" name="J. Gen. Virol.">
        <title>Sequence analysis of VP1 and VP7 genes suggests occurrence of a reassortant of G2 rotavirus responsible for an epidemic of gastroenteritis.</title>
        <authorList>
            <person name="Zao C.L."/>
            <person name="Yu W.N."/>
            <person name="Kao C.L."/>
            <person name="Taniguchi K."/>
            <person name="Lee C.Y."/>
            <person name="Lee C.N."/>
        </authorList>
    </citation>
    <scope>NUCLEOTIDE SEQUENCE [GENOMIC RNA] OF 10-151</scope>
</reference>
<protein>
    <recommendedName>
        <fullName>RNA-directed RNA polymerase</fullName>
        <ecNumber>2.7.7.48</ecNumber>
    </recommendedName>
    <alternativeName>
        <fullName>Protein VP1</fullName>
    </alternativeName>
</protein>